<protein>
    <recommendedName>
        <fullName evidence="1">1-deoxy-D-xylulose 5-phosphate reductoisomerase</fullName>
        <shortName evidence="1">DXP reductoisomerase</shortName>
        <ecNumber evidence="1">1.1.1.267</ecNumber>
    </recommendedName>
    <alternativeName>
        <fullName evidence="1">1-deoxyxylulose-5-phosphate reductoisomerase</fullName>
    </alternativeName>
    <alternativeName>
        <fullName evidence="1">2-C-methyl-D-erythritol 4-phosphate synthase</fullName>
    </alternativeName>
</protein>
<comment type="function">
    <text evidence="1">Catalyzes the NADPH-dependent rearrangement and reduction of 1-deoxy-D-xylulose-5-phosphate (DXP) to 2-C-methyl-D-erythritol 4-phosphate (MEP).</text>
</comment>
<comment type="catalytic activity">
    <reaction evidence="1">
        <text>2-C-methyl-D-erythritol 4-phosphate + NADP(+) = 1-deoxy-D-xylulose 5-phosphate + NADPH + H(+)</text>
        <dbReference type="Rhea" id="RHEA:13717"/>
        <dbReference type="ChEBI" id="CHEBI:15378"/>
        <dbReference type="ChEBI" id="CHEBI:57783"/>
        <dbReference type="ChEBI" id="CHEBI:57792"/>
        <dbReference type="ChEBI" id="CHEBI:58262"/>
        <dbReference type="ChEBI" id="CHEBI:58349"/>
        <dbReference type="EC" id="1.1.1.267"/>
    </reaction>
    <physiologicalReaction direction="right-to-left" evidence="1">
        <dbReference type="Rhea" id="RHEA:13719"/>
    </physiologicalReaction>
</comment>
<comment type="cofactor">
    <cofactor evidence="1">
        <name>Mg(2+)</name>
        <dbReference type="ChEBI" id="CHEBI:18420"/>
    </cofactor>
    <cofactor evidence="1">
        <name>Mn(2+)</name>
        <dbReference type="ChEBI" id="CHEBI:29035"/>
    </cofactor>
</comment>
<comment type="pathway">
    <text evidence="1">Isoprenoid biosynthesis; isopentenyl diphosphate biosynthesis via DXP pathway; isopentenyl diphosphate from 1-deoxy-D-xylulose 5-phosphate: step 1/6.</text>
</comment>
<comment type="similarity">
    <text evidence="1">Belongs to the DXR family.</text>
</comment>
<reference key="1">
    <citation type="journal article" date="2003" name="DNA Res.">
        <title>Complete genome structure of Gloeobacter violaceus PCC 7421, a cyanobacterium that lacks thylakoids.</title>
        <authorList>
            <person name="Nakamura Y."/>
            <person name="Kaneko T."/>
            <person name="Sato S."/>
            <person name="Mimuro M."/>
            <person name="Miyashita H."/>
            <person name="Tsuchiya T."/>
            <person name="Sasamoto S."/>
            <person name="Watanabe A."/>
            <person name="Kawashima K."/>
            <person name="Kishida Y."/>
            <person name="Kiyokawa C."/>
            <person name="Kohara M."/>
            <person name="Matsumoto M."/>
            <person name="Matsuno A."/>
            <person name="Nakazaki N."/>
            <person name="Shimpo S."/>
            <person name="Takeuchi C."/>
            <person name="Yamada M."/>
            <person name="Tabata S."/>
        </authorList>
    </citation>
    <scope>NUCLEOTIDE SEQUENCE [LARGE SCALE GENOMIC DNA]</scope>
    <source>
        <strain>ATCC 29082 / PCC 7421</strain>
    </source>
</reference>
<dbReference type="EC" id="1.1.1.267" evidence="1"/>
<dbReference type="EMBL" id="BA000045">
    <property type="protein sequence ID" value="BAC90193.1"/>
    <property type="molecule type" value="Genomic_DNA"/>
</dbReference>
<dbReference type="RefSeq" id="NP_925198.1">
    <property type="nucleotide sequence ID" value="NC_005125.1"/>
</dbReference>
<dbReference type="RefSeq" id="WP_011142249.1">
    <property type="nucleotide sequence ID" value="NC_005125.1"/>
</dbReference>
<dbReference type="SMR" id="Q7NID1"/>
<dbReference type="FunCoup" id="Q7NID1">
    <property type="interactions" value="264"/>
</dbReference>
<dbReference type="STRING" id="251221.gene:10759747"/>
<dbReference type="EnsemblBacteria" id="BAC90193">
    <property type="protein sequence ID" value="BAC90193"/>
    <property type="gene ID" value="BAC90193"/>
</dbReference>
<dbReference type="KEGG" id="gvi:gll2252"/>
<dbReference type="PATRIC" id="fig|251221.4.peg.2286"/>
<dbReference type="eggNOG" id="COG0743">
    <property type="taxonomic scope" value="Bacteria"/>
</dbReference>
<dbReference type="HOGENOM" id="CLU_035714_4_0_3"/>
<dbReference type="InParanoid" id="Q7NID1"/>
<dbReference type="OrthoDB" id="9806546at2"/>
<dbReference type="PhylomeDB" id="Q7NID1"/>
<dbReference type="UniPathway" id="UPA00056">
    <property type="reaction ID" value="UER00092"/>
</dbReference>
<dbReference type="Proteomes" id="UP000000557">
    <property type="component" value="Chromosome"/>
</dbReference>
<dbReference type="GO" id="GO:0030604">
    <property type="term" value="F:1-deoxy-D-xylulose-5-phosphate reductoisomerase activity"/>
    <property type="evidence" value="ECO:0000318"/>
    <property type="project" value="GO_Central"/>
</dbReference>
<dbReference type="GO" id="GO:0030145">
    <property type="term" value="F:manganese ion binding"/>
    <property type="evidence" value="ECO:0000318"/>
    <property type="project" value="GO_Central"/>
</dbReference>
<dbReference type="GO" id="GO:0070402">
    <property type="term" value="F:NADPH binding"/>
    <property type="evidence" value="ECO:0000318"/>
    <property type="project" value="GO_Central"/>
</dbReference>
<dbReference type="GO" id="GO:0051484">
    <property type="term" value="P:isopentenyl diphosphate biosynthetic process, methylerythritol 4-phosphate pathway involved in terpenoid biosynthetic process"/>
    <property type="evidence" value="ECO:0000318"/>
    <property type="project" value="GO_Central"/>
</dbReference>
<dbReference type="FunFam" id="1.10.1740.10:FF:000004">
    <property type="entry name" value="1-deoxy-D-xylulose 5-phosphate reductoisomerase"/>
    <property type="match status" value="1"/>
</dbReference>
<dbReference type="FunFam" id="3.40.50.720:FF:000183">
    <property type="entry name" value="1-deoxy-D-xylulose 5-phosphate reductoisomerase, chloroplastic"/>
    <property type="match status" value="1"/>
</dbReference>
<dbReference type="Gene3D" id="1.10.1740.10">
    <property type="match status" value="1"/>
</dbReference>
<dbReference type="Gene3D" id="3.40.50.720">
    <property type="entry name" value="NAD(P)-binding Rossmann-like Domain"/>
    <property type="match status" value="1"/>
</dbReference>
<dbReference type="HAMAP" id="MF_00183">
    <property type="entry name" value="DXP_reductoisom"/>
    <property type="match status" value="1"/>
</dbReference>
<dbReference type="InterPro" id="IPR003821">
    <property type="entry name" value="DXP_reductoisomerase"/>
</dbReference>
<dbReference type="InterPro" id="IPR013644">
    <property type="entry name" value="DXP_reductoisomerase_C"/>
</dbReference>
<dbReference type="InterPro" id="IPR013512">
    <property type="entry name" value="DXP_reductoisomerase_N"/>
</dbReference>
<dbReference type="InterPro" id="IPR026877">
    <property type="entry name" value="DXPR_C"/>
</dbReference>
<dbReference type="InterPro" id="IPR036169">
    <property type="entry name" value="DXPR_C_sf"/>
</dbReference>
<dbReference type="InterPro" id="IPR036291">
    <property type="entry name" value="NAD(P)-bd_dom_sf"/>
</dbReference>
<dbReference type="NCBIfam" id="TIGR00243">
    <property type="entry name" value="Dxr"/>
    <property type="match status" value="1"/>
</dbReference>
<dbReference type="NCBIfam" id="NF009114">
    <property type="entry name" value="PRK12464.1"/>
    <property type="match status" value="1"/>
</dbReference>
<dbReference type="PANTHER" id="PTHR30525">
    <property type="entry name" value="1-DEOXY-D-XYLULOSE 5-PHOSPHATE REDUCTOISOMERASE"/>
    <property type="match status" value="1"/>
</dbReference>
<dbReference type="PANTHER" id="PTHR30525:SF0">
    <property type="entry name" value="1-DEOXY-D-XYLULOSE 5-PHOSPHATE REDUCTOISOMERASE, CHLOROPLASTIC"/>
    <property type="match status" value="1"/>
</dbReference>
<dbReference type="Pfam" id="PF08436">
    <property type="entry name" value="DXP_redisom_C"/>
    <property type="match status" value="1"/>
</dbReference>
<dbReference type="Pfam" id="PF02670">
    <property type="entry name" value="DXP_reductoisom"/>
    <property type="match status" value="1"/>
</dbReference>
<dbReference type="Pfam" id="PF13288">
    <property type="entry name" value="DXPR_C"/>
    <property type="match status" value="1"/>
</dbReference>
<dbReference type="PIRSF" id="PIRSF006205">
    <property type="entry name" value="Dxp_reductismrs"/>
    <property type="match status" value="1"/>
</dbReference>
<dbReference type="SUPFAM" id="SSF69055">
    <property type="entry name" value="1-deoxy-D-xylulose-5-phosphate reductoisomerase, C-terminal domain"/>
    <property type="match status" value="1"/>
</dbReference>
<dbReference type="SUPFAM" id="SSF55347">
    <property type="entry name" value="Glyceraldehyde-3-phosphate dehydrogenase-like, C-terminal domain"/>
    <property type="match status" value="1"/>
</dbReference>
<dbReference type="SUPFAM" id="SSF51735">
    <property type="entry name" value="NAD(P)-binding Rossmann-fold domains"/>
    <property type="match status" value="1"/>
</dbReference>
<accession>Q7NID1</accession>
<gene>
    <name evidence="1" type="primary">dxr</name>
    <name type="ordered locus">gll2252</name>
</gene>
<organism>
    <name type="scientific">Gloeobacter violaceus (strain ATCC 29082 / PCC 7421)</name>
    <dbReference type="NCBI Taxonomy" id="251221"/>
    <lineage>
        <taxon>Bacteria</taxon>
        <taxon>Bacillati</taxon>
        <taxon>Cyanobacteriota</taxon>
        <taxon>Cyanophyceae</taxon>
        <taxon>Gloeobacterales</taxon>
        <taxon>Gloeobacteraceae</taxon>
        <taxon>Gloeobacter</taxon>
    </lineage>
</organism>
<feature type="chain" id="PRO_0000163657" description="1-deoxy-D-xylulose 5-phosphate reductoisomerase">
    <location>
        <begin position="1"/>
        <end position="392"/>
    </location>
</feature>
<feature type="binding site" evidence="1">
    <location>
        <position position="10"/>
    </location>
    <ligand>
        <name>NADPH</name>
        <dbReference type="ChEBI" id="CHEBI:57783"/>
    </ligand>
</feature>
<feature type="binding site" evidence="1">
    <location>
        <position position="11"/>
    </location>
    <ligand>
        <name>NADPH</name>
        <dbReference type="ChEBI" id="CHEBI:57783"/>
    </ligand>
</feature>
<feature type="binding site" evidence="1">
    <location>
        <position position="12"/>
    </location>
    <ligand>
        <name>NADPH</name>
        <dbReference type="ChEBI" id="CHEBI:57783"/>
    </ligand>
</feature>
<feature type="binding site" evidence="1">
    <location>
        <position position="13"/>
    </location>
    <ligand>
        <name>NADPH</name>
        <dbReference type="ChEBI" id="CHEBI:57783"/>
    </ligand>
</feature>
<feature type="binding site" evidence="1">
    <location>
        <position position="38"/>
    </location>
    <ligand>
        <name>NADPH</name>
        <dbReference type="ChEBI" id="CHEBI:57783"/>
    </ligand>
</feature>
<feature type="binding site" evidence="1">
    <location>
        <position position="124"/>
    </location>
    <ligand>
        <name>NADPH</name>
        <dbReference type="ChEBI" id="CHEBI:57783"/>
    </ligand>
</feature>
<feature type="binding site" evidence="1">
    <location>
        <position position="125"/>
    </location>
    <ligand>
        <name>1-deoxy-D-xylulose 5-phosphate</name>
        <dbReference type="ChEBI" id="CHEBI:57792"/>
    </ligand>
</feature>
<feature type="binding site" evidence="1">
    <location>
        <position position="126"/>
    </location>
    <ligand>
        <name>NADPH</name>
        <dbReference type="ChEBI" id="CHEBI:57783"/>
    </ligand>
</feature>
<feature type="binding site" evidence="1">
    <location>
        <position position="150"/>
    </location>
    <ligand>
        <name>Mn(2+)</name>
        <dbReference type="ChEBI" id="CHEBI:29035"/>
    </ligand>
</feature>
<feature type="binding site" evidence="1">
    <location>
        <position position="151"/>
    </location>
    <ligand>
        <name>1-deoxy-D-xylulose 5-phosphate</name>
        <dbReference type="ChEBI" id="CHEBI:57792"/>
    </ligand>
</feature>
<feature type="binding site" evidence="1">
    <location>
        <position position="152"/>
    </location>
    <ligand>
        <name>1-deoxy-D-xylulose 5-phosphate</name>
        <dbReference type="ChEBI" id="CHEBI:57792"/>
    </ligand>
</feature>
<feature type="binding site" evidence="1">
    <location>
        <position position="152"/>
    </location>
    <ligand>
        <name>Mn(2+)</name>
        <dbReference type="ChEBI" id="CHEBI:29035"/>
    </ligand>
</feature>
<feature type="binding site" evidence="1">
    <location>
        <position position="176"/>
    </location>
    <ligand>
        <name>1-deoxy-D-xylulose 5-phosphate</name>
        <dbReference type="ChEBI" id="CHEBI:57792"/>
    </ligand>
</feature>
<feature type="binding site" evidence="1">
    <location>
        <position position="199"/>
    </location>
    <ligand>
        <name>1-deoxy-D-xylulose 5-phosphate</name>
        <dbReference type="ChEBI" id="CHEBI:57792"/>
    </ligand>
</feature>
<feature type="binding site" evidence="1">
    <location>
        <position position="205"/>
    </location>
    <ligand>
        <name>NADPH</name>
        <dbReference type="ChEBI" id="CHEBI:57783"/>
    </ligand>
</feature>
<feature type="binding site" evidence="1">
    <location>
        <position position="212"/>
    </location>
    <ligand>
        <name>1-deoxy-D-xylulose 5-phosphate</name>
        <dbReference type="ChEBI" id="CHEBI:57792"/>
    </ligand>
</feature>
<feature type="binding site" evidence="1">
    <location>
        <position position="217"/>
    </location>
    <ligand>
        <name>1-deoxy-D-xylulose 5-phosphate</name>
        <dbReference type="ChEBI" id="CHEBI:57792"/>
    </ligand>
</feature>
<feature type="binding site" evidence="1">
    <location>
        <position position="218"/>
    </location>
    <ligand>
        <name>1-deoxy-D-xylulose 5-phosphate</name>
        <dbReference type="ChEBI" id="CHEBI:57792"/>
    </ligand>
</feature>
<feature type="binding site" evidence="1">
    <location>
        <position position="221"/>
    </location>
    <ligand>
        <name>1-deoxy-D-xylulose 5-phosphate</name>
        <dbReference type="ChEBI" id="CHEBI:57792"/>
    </ligand>
</feature>
<feature type="binding site" evidence="1">
    <location>
        <position position="221"/>
    </location>
    <ligand>
        <name>Mn(2+)</name>
        <dbReference type="ChEBI" id="CHEBI:29035"/>
    </ligand>
</feature>
<proteinExistence type="inferred from homology"/>
<sequence length="392" mass="42604">MKHIALLGSTGSIGTQTLDIVAEYPERFAVTGMTAHSNMELLAEQIRRFRPQVVAVGSEARRAALAALLAGFDGMPEMFVGEKGCCTVASQAPAEVVVTGIVGCAGLMPTLAAVDAGRDLALANKETLVAGGPVVMPRIRARGVKLLPVDSEHSAIFQCLQGVPEGALKRILLTASGGAFRDWPVEKLAEATTADALKHPNWVMGAKITVDSATLMNKGLEVIEAHWLFGLDYDRIEIVIHPQSIVHSLVELADTSVVAQLGWPDMRLPILYALSWPERLATPWKPLDLARVGTLTFKEPDHERYPNMRLAYQAGRAGGTYPTVLNAANEEAVAQFLQEKVRFLEMSRLLEATLEAHKSAGEPDLDDVCGADRWAREHVRWLVERSPARVLI</sequence>
<evidence type="ECO:0000255" key="1">
    <source>
        <dbReference type="HAMAP-Rule" id="MF_00183"/>
    </source>
</evidence>
<keyword id="KW-0414">Isoprene biosynthesis</keyword>
<keyword id="KW-0464">Manganese</keyword>
<keyword id="KW-0479">Metal-binding</keyword>
<keyword id="KW-0521">NADP</keyword>
<keyword id="KW-0560">Oxidoreductase</keyword>
<keyword id="KW-1185">Reference proteome</keyword>
<name>DXR_GLOVI</name>